<feature type="chain" id="PRO_0000067940" description="DNA-directed RNA polymerase subunit beta''">
    <location>
        <begin position="1"/>
        <end position="1330"/>
    </location>
</feature>
<feature type="binding site" evidence="1">
    <location>
        <position position="214"/>
    </location>
    <ligand>
        <name>Zn(2+)</name>
        <dbReference type="ChEBI" id="CHEBI:29105"/>
    </ligand>
</feature>
<feature type="binding site" evidence="1">
    <location>
        <position position="282"/>
    </location>
    <ligand>
        <name>Zn(2+)</name>
        <dbReference type="ChEBI" id="CHEBI:29105"/>
    </ligand>
</feature>
<feature type="binding site" evidence="1">
    <location>
        <position position="289"/>
    </location>
    <ligand>
        <name>Zn(2+)</name>
        <dbReference type="ChEBI" id="CHEBI:29105"/>
    </ligand>
</feature>
<feature type="binding site" evidence="1">
    <location>
        <position position="292"/>
    </location>
    <ligand>
        <name>Zn(2+)</name>
        <dbReference type="ChEBI" id="CHEBI:29105"/>
    </ligand>
</feature>
<proteinExistence type="inferred from homology"/>
<organism>
    <name type="scientific">Physcomitrium patens</name>
    <name type="common">Spreading-leaved earth moss</name>
    <name type="synonym">Physcomitrella patens</name>
    <dbReference type="NCBI Taxonomy" id="3218"/>
    <lineage>
        <taxon>Eukaryota</taxon>
        <taxon>Viridiplantae</taxon>
        <taxon>Streptophyta</taxon>
        <taxon>Embryophyta</taxon>
        <taxon>Bryophyta</taxon>
        <taxon>Bryophytina</taxon>
        <taxon>Bryopsida</taxon>
        <taxon>Funariidae</taxon>
        <taxon>Funariales</taxon>
        <taxon>Funariaceae</taxon>
        <taxon>Physcomitrium</taxon>
    </lineage>
</organism>
<accession>P60290</accession>
<protein>
    <recommendedName>
        <fullName evidence="1">DNA-directed RNA polymerase subunit beta''</fullName>
        <ecNumber evidence="1">2.7.7.6</ecNumber>
    </recommendedName>
    <alternativeName>
        <fullName evidence="1">PEP</fullName>
    </alternativeName>
    <alternativeName>
        <fullName evidence="1">Plastid-encoded RNA polymerase subunit beta''</fullName>
        <shortName evidence="1">RNA polymerase subunit beta''</shortName>
    </alternativeName>
</protein>
<dbReference type="EC" id="2.7.7.6" evidence="1"/>
<dbReference type="EMBL" id="AP005672">
    <property type="protein sequence ID" value="BAC85071.1"/>
    <property type="molecule type" value="Genomic_DNA"/>
</dbReference>
<dbReference type="RefSeq" id="NP_904221.3">
    <property type="nucleotide sequence ID" value="NC_005087.2"/>
</dbReference>
<dbReference type="SMR" id="P60290"/>
<dbReference type="FunCoup" id="P60290">
    <property type="interactions" value="84"/>
</dbReference>
<dbReference type="STRING" id="3218.P60290"/>
<dbReference type="GeneID" id="2546817"/>
<dbReference type="KEGG" id="ppp:2546817"/>
<dbReference type="eggNOG" id="ENOG502QPYA">
    <property type="taxonomic scope" value="Eukaryota"/>
</dbReference>
<dbReference type="InParanoid" id="P60290"/>
<dbReference type="OrthoDB" id="1926772at2759"/>
<dbReference type="Proteomes" id="UP000006727">
    <property type="component" value="Chloroplast"/>
</dbReference>
<dbReference type="GO" id="GO:0009507">
    <property type="term" value="C:chloroplast"/>
    <property type="evidence" value="ECO:0007669"/>
    <property type="project" value="UniProtKB-SubCell"/>
</dbReference>
<dbReference type="GO" id="GO:0000428">
    <property type="term" value="C:DNA-directed RNA polymerase complex"/>
    <property type="evidence" value="ECO:0007669"/>
    <property type="project" value="UniProtKB-KW"/>
</dbReference>
<dbReference type="GO" id="GO:0005739">
    <property type="term" value="C:mitochondrion"/>
    <property type="evidence" value="ECO:0007669"/>
    <property type="project" value="GOC"/>
</dbReference>
<dbReference type="GO" id="GO:0003677">
    <property type="term" value="F:DNA binding"/>
    <property type="evidence" value="ECO:0007669"/>
    <property type="project" value="UniProtKB-UniRule"/>
</dbReference>
<dbReference type="GO" id="GO:0003899">
    <property type="term" value="F:DNA-directed RNA polymerase activity"/>
    <property type="evidence" value="ECO:0007669"/>
    <property type="project" value="UniProtKB-UniRule"/>
</dbReference>
<dbReference type="GO" id="GO:0008270">
    <property type="term" value="F:zinc ion binding"/>
    <property type="evidence" value="ECO:0007669"/>
    <property type="project" value="UniProtKB-UniRule"/>
</dbReference>
<dbReference type="GO" id="GO:0006351">
    <property type="term" value="P:DNA-templated transcription"/>
    <property type="evidence" value="ECO:0007669"/>
    <property type="project" value="UniProtKB-UniRule"/>
</dbReference>
<dbReference type="CDD" id="cd02655">
    <property type="entry name" value="RNAP_beta'_C"/>
    <property type="match status" value="1"/>
</dbReference>
<dbReference type="Gene3D" id="1.10.132.30">
    <property type="match status" value="1"/>
</dbReference>
<dbReference type="Gene3D" id="1.10.150.390">
    <property type="match status" value="1"/>
</dbReference>
<dbReference type="Gene3D" id="1.10.1790.20">
    <property type="match status" value="1"/>
</dbReference>
<dbReference type="Gene3D" id="1.10.274.100">
    <property type="entry name" value="RNA polymerase Rpb1, domain 3"/>
    <property type="match status" value="1"/>
</dbReference>
<dbReference type="HAMAP" id="MF_01324">
    <property type="entry name" value="RNApol_bact_RpoC2"/>
    <property type="match status" value="1"/>
</dbReference>
<dbReference type="InterPro" id="IPR012756">
    <property type="entry name" value="DNA-dir_RpoC2_beta_pp"/>
</dbReference>
<dbReference type="InterPro" id="IPR050254">
    <property type="entry name" value="RNA_pol_beta''_euk"/>
</dbReference>
<dbReference type="InterPro" id="IPR042102">
    <property type="entry name" value="RNA_pol_Rpb1_3_sf"/>
</dbReference>
<dbReference type="InterPro" id="IPR007083">
    <property type="entry name" value="RNA_pol_Rpb1_4"/>
</dbReference>
<dbReference type="InterPro" id="IPR007081">
    <property type="entry name" value="RNA_pol_Rpb1_5"/>
</dbReference>
<dbReference type="InterPro" id="IPR038120">
    <property type="entry name" value="Rpb1_funnel_sf"/>
</dbReference>
<dbReference type="NCBIfam" id="TIGR02388">
    <property type="entry name" value="rpoC2_cyan"/>
    <property type="match status" value="1"/>
</dbReference>
<dbReference type="PANTHER" id="PTHR34995">
    <property type="entry name" value="DNA-DIRECTED RNA POLYMERASE SUBUNIT BETA"/>
    <property type="match status" value="1"/>
</dbReference>
<dbReference type="PANTHER" id="PTHR34995:SF1">
    <property type="entry name" value="DNA-DIRECTED RNA POLYMERASE SUBUNIT BETA"/>
    <property type="match status" value="1"/>
</dbReference>
<dbReference type="Pfam" id="PF05000">
    <property type="entry name" value="RNA_pol_Rpb1_4"/>
    <property type="match status" value="1"/>
</dbReference>
<dbReference type="Pfam" id="PF04998">
    <property type="entry name" value="RNA_pol_Rpb1_5"/>
    <property type="match status" value="2"/>
</dbReference>
<dbReference type="SUPFAM" id="SSF64484">
    <property type="entry name" value="beta and beta-prime subunits of DNA dependent RNA-polymerase"/>
    <property type="match status" value="1"/>
</dbReference>
<gene>
    <name evidence="1" type="primary">rpoC2</name>
</gene>
<evidence type="ECO:0000255" key="1">
    <source>
        <dbReference type="HAMAP-Rule" id="MF_01324"/>
    </source>
</evidence>
<sequence length="1330" mass="154004">MLFYNKVMDRTAIKQLISRLITHFGITYTTYILDQLKTVGFKQATQAAISLGIDDLLTAPSKSWLIQDAEQQGYISEKHYRYGNVHAVEKLRQLIETWYATSEYLKQEMNPNFRMTDPLNPVHMMSFSGARGSTSQVHQLVGMRGLMSDPQGQIIDLPIQSNFREGLSLTEYIISCYGARKGVVDTAVRTSDAGYLTRRLVEVVQHIVVRKVDCGTSENIFVTPLQNNYKKNNKLIGRILADNIYINGRCIAIRNQDITTNLVISLINFQRKGIFIRSPLICKSMLWICQLCYGWSLTHGNLIELGEAVGIIAGQSIGEPGTQLTLRTFHTGGVFTGDIAEHIRTPFNGIIQFDTNSVYPTRTRHGHPAWICNNNLSVVIKSKKKLHNLVIPTQSLLLVQSNQYVESKQVIAEVRAKTSPFKEKVQKYIYSNLSGEMHWSSKVQHSSEYIHSNVHLLRKTGHIWILAGNFDKDNKFSFIFYQNQDKLDNKLPIAKQTLNYFQLKEHFLNNFWNSIYSSIILYNYRFLEKKNNKYEKKLLFQFMLKLPKNGILKQNDIFAIFNDPKYRIKNSGIIKYGNIKVDLINKKNDIFEDQKTKTVRPRYKILKEGNFFLLPEEVYILDQSSFSSILVKNNSFIKAGTKITFNISSKITGFVKIKKKFNNFKIKILPGSIYYPKEKQKNFKQNGILIPPGEKIFEQFRAKNWIYLEWIVLSKDNSFFLIRPAIEYKIIFNDNPLTLPIPFYLDLLKEQKKIKIQTVKYILYEDSEEVEINPDTDIQLIQTCLILNWETKVFIKEAHISFIKIRINKIIKNFFQINLIENINLMNKKKNNNIILNYLFKKKRYIINQKDCEKILLLSKTWGIIRTPSNKNQEKSFFLILSPFNLFQTILFDKTKQNLKIENNVEKLFTYEPKKIIKTFNIEKRKNFVEFLGLLGYLQNITKSFQLFSCKKFSDKSIPINFSIIDNLKKKIKISKWFFLNENKKVQKFFLTQNTILSLLNWSFPIFDLAKKKTQLFNLGHFFCDGLSIAEYPTFSESGQIIAIYDDLSLVIRLAKPYLATGGAIIHNNYGEIVKEGDILITLIYERLKSGDIIQGLPKVEQLLEARLTNPVSINLEKGFGEWNKDMTNFFGSLWGYFLSAQISMEQSQVNLVNQIQKVYRSQGVNISDKHIEIIVRQMTSKVFTLEDGMTNGFLPGELIEFARAKRMNRALEEVIPYKPVLLGITKASLNTQSFISEASFQETTRVLAKAALRGRIDWLKGLKENVILGGIIPTGTGCEEVLWQITLEKQKNILLKKNKSKLFHNKVKDIFLYKKLSISFTSEKIHKNY</sequence>
<reference key="1">
    <citation type="journal article" date="2003" name="Nucleic Acids Res.">
        <title>Complete chloroplast DNA sequence of the moss Physcomitrella patens: evidence for the loss and relocation of rpoA from the chloroplast to the nucleus.</title>
        <authorList>
            <person name="Sugiura C."/>
            <person name="Kobayashi Y."/>
            <person name="Setsuyuki A."/>
            <person name="Sugita C."/>
            <person name="Sugita M."/>
        </authorList>
    </citation>
    <scope>NUCLEOTIDE SEQUENCE [LARGE SCALE GENOMIC DNA]</scope>
    <source>
        <strain>cv. Gransden 2004</strain>
    </source>
</reference>
<name>RPOC2_PHYPA</name>
<geneLocation type="chloroplast"/>
<keyword id="KW-0150">Chloroplast</keyword>
<keyword id="KW-0240">DNA-directed RNA polymerase</keyword>
<keyword id="KW-0479">Metal-binding</keyword>
<keyword id="KW-0548">Nucleotidyltransferase</keyword>
<keyword id="KW-0934">Plastid</keyword>
<keyword id="KW-1185">Reference proteome</keyword>
<keyword id="KW-0804">Transcription</keyword>
<keyword id="KW-0808">Transferase</keyword>
<keyword id="KW-0862">Zinc</keyword>
<comment type="function">
    <text evidence="1">DNA-dependent RNA polymerase catalyzes the transcription of DNA into RNA using the four ribonucleoside triphosphates as substrates.</text>
</comment>
<comment type="catalytic activity">
    <reaction evidence="1">
        <text>RNA(n) + a ribonucleoside 5'-triphosphate = RNA(n+1) + diphosphate</text>
        <dbReference type="Rhea" id="RHEA:21248"/>
        <dbReference type="Rhea" id="RHEA-COMP:14527"/>
        <dbReference type="Rhea" id="RHEA-COMP:17342"/>
        <dbReference type="ChEBI" id="CHEBI:33019"/>
        <dbReference type="ChEBI" id="CHEBI:61557"/>
        <dbReference type="ChEBI" id="CHEBI:140395"/>
        <dbReference type="EC" id="2.7.7.6"/>
    </reaction>
</comment>
<comment type="cofactor">
    <cofactor evidence="1">
        <name>Zn(2+)</name>
        <dbReference type="ChEBI" id="CHEBI:29105"/>
    </cofactor>
    <text evidence="1">Binds 1 Zn(2+) ion per subunit.</text>
</comment>
<comment type="subunit">
    <text evidence="1">In plastids the minimal PEP RNA polymerase catalytic core is composed of four subunits: alpha, beta, beta', and beta''. When a (nuclear-encoded) sigma factor is associated with the core the holoenzyme is formed, which can initiate transcription.</text>
</comment>
<comment type="subcellular location">
    <subcellularLocation>
        <location evidence="1">Plastid</location>
        <location evidence="1">Chloroplast</location>
    </subcellularLocation>
</comment>
<comment type="similarity">
    <text evidence="1">Belongs to the RNA polymerase beta' chain family. RpoC2 subfamily.</text>
</comment>